<dbReference type="EMBL" id="X75950">
    <property type="protein sequence ID" value="CAA53551.1"/>
    <property type="molecule type" value="Genomic_DNA"/>
</dbReference>
<dbReference type="EMBL" id="Z28222">
    <property type="protein sequence ID" value="CAA82067.1"/>
    <property type="molecule type" value="Genomic_DNA"/>
</dbReference>
<dbReference type="EMBL" id="BK006944">
    <property type="protein sequence ID" value="DAA08947.1"/>
    <property type="molecule type" value="Genomic_DNA"/>
</dbReference>
<dbReference type="PIR" id="S38066">
    <property type="entry name" value="S38066"/>
</dbReference>
<dbReference type="RefSeq" id="NP_012700.1">
    <property type="nucleotide sequence ID" value="NM_001179787.1"/>
</dbReference>
<dbReference type="BioGRID" id="33943">
    <property type="interactions" value="39"/>
</dbReference>
<dbReference type="DIP" id="DIP-5690N"/>
<dbReference type="FunCoup" id="P35995">
    <property type="interactions" value="116"/>
</dbReference>
<dbReference type="IntAct" id="P35995">
    <property type="interactions" value="2"/>
</dbReference>
<dbReference type="STRING" id="4932.YKL222C"/>
<dbReference type="PaxDb" id="4932-YKL222C"/>
<dbReference type="PeptideAtlas" id="P35995"/>
<dbReference type="EnsemblFungi" id="YKL222C_mRNA">
    <property type="protein sequence ID" value="YKL222C"/>
    <property type="gene ID" value="YKL222C"/>
</dbReference>
<dbReference type="GeneID" id="853658"/>
<dbReference type="KEGG" id="sce:YKL222C"/>
<dbReference type="AGR" id="SGD:S000001705"/>
<dbReference type="SGD" id="S000001705">
    <property type="gene designation" value="YKL222C"/>
</dbReference>
<dbReference type="VEuPathDB" id="FungiDB:YKL222C"/>
<dbReference type="eggNOG" id="ENOG502SJDI">
    <property type="taxonomic scope" value="Eukaryota"/>
</dbReference>
<dbReference type="GeneTree" id="ENSGT00940000176356"/>
<dbReference type="HOGENOM" id="CLU_010594_0_0_1"/>
<dbReference type="InParanoid" id="P35995"/>
<dbReference type="OMA" id="YLENLWH"/>
<dbReference type="OrthoDB" id="4356994at2759"/>
<dbReference type="BioCyc" id="YEAST:G3O-31977-MONOMER"/>
<dbReference type="BioGRID-ORCS" id="853658">
    <property type="hits" value="0 hits in 13 CRISPR screens"/>
</dbReference>
<dbReference type="PRO" id="PR:P35995"/>
<dbReference type="Proteomes" id="UP000002311">
    <property type="component" value="Chromosome XI"/>
</dbReference>
<dbReference type="RNAct" id="P35995">
    <property type="molecule type" value="protein"/>
</dbReference>
<dbReference type="GO" id="GO:0072686">
    <property type="term" value="C:mitotic spindle"/>
    <property type="evidence" value="ECO:0000314"/>
    <property type="project" value="SGD"/>
</dbReference>
<dbReference type="GO" id="GO:0005634">
    <property type="term" value="C:nucleus"/>
    <property type="evidence" value="ECO:0000314"/>
    <property type="project" value="SGD"/>
</dbReference>
<dbReference type="GO" id="GO:0000981">
    <property type="term" value="F:DNA-binding transcription factor activity, RNA polymerase II-specific"/>
    <property type="evidence" value="ECO:0007669"/>
    <property type="project" value="InterPro"/>
</dbReference>
<dbReference type="GO" id="GO:0043565">
    <property type="term" value="F:sequence-specific DNA binding"/>
    <property type="evidence" value="ECO:0007005"/>
    <property type="project" value="SGD"/>
</dbReference>
<dbReference type="GO" id="GO:0008270">
    <property type="term" value="F:zinc ion binding"/>
    <property type="evidence" value="ECO:0007669"/>
    <property type="project" value="InterPro"/>
</dbReference>
<dbReference type="GO" id="GO:0006351">
    <property type="term" value="P:DNA-templated transcription"/>
    <property type="evidence" value="ECO:0007669"/>
    <property type="project" value="InterPro"/>
</dbReference>
<dbReference type="CDD" id="cd12148">
    <property type="entry name" value="fungal_TF_MHR"/>
    <property type="match status" value="1"/>
</dbReference>
<dbReference type="CDD" id="cd00067">
    <property type="entry name" value="GAL4"/>
    <property type="match status" value="1"/>
</dbReference>
<dbReference type="Gene3D" id="4.10.240.10">
    <property type="entry name" value="Zn(2)-C6 fungal-type DNA-binding domain"/>
    <property type="match status" value="1"/>
</dbReference>
<dbReference type="InterPro" id="IPR001611">
    <property type="entry name" value="Leu-rich_rpt"/>
</dbReference>
<dbReference type="InterPro" id="IPR007219">
    <property type="entry name" value="Transcription_factor_dom_fun"/>
</dbReference>
<dbReference type="InterPro" id="IPR052693">
    <property type="entry name" value="Yeast_MDR_Regulatory"/>
</dbReference>
<dbReference type="InterPro" id="IPR036864">
    <property type="entry name" value="Zn2-C6_fun-type_DNA-bd_sf"/>
</dbReference>
<dbReference type="InterPro" id="IPR001138">
    <property type="entry name" value="Zn2Cys6_DnaBD"/>
</dbReference>
<dbReference type="PANTHER" id="PTHR31405">
    <property type="entry name" value="TRANSCRIPTION FACTOR PDR8-RELATED"/>
    <property type="match status" value="1"/>
</dbReference>
<dbReference type="PANTHER" id="PTHR31405:SF8">
    <property type="entry name" value="TRANSCRIPTION FACTOR PDR8-RELATED"/>
    <property type="match status" value="1"/>
</dbReference>
<dbReference type="Pfam" id="PF04082">
    <property type="entry name" value="Fungal_trans"/>
    <property type="match status" value="1"/>
</dbReference>
<dbReference type="Pfam" id="PF00172">
    <property type="entry name" value="Zn_clus"/>
    <property type="match status" value="1"/>
</dbReference>
<dbReference type="SMART" id="SM00906">
    <property type="entry name" value="Fungal_trans"/>
    <property type="match status" value="1"/>
</dbReference>
<dbReference type="SMART" id="SM00066">
    <property type="entry name" value="GAL4"/>
    <property type="match status" value="1"/>
</dbReference>
<dbReference type="SUPFAM" id="SSF57701">
    <property type="entry name" value="Zn2/Cys6 DNA-binding domain"/>
    <property type="match status" value="1"/>
</dbReference>
<dbReference type="PROSITE" id="PS51450">
    <property type="entry name" value="LRR"/>
    <property type="match status" value="2"/>
</dbReference>
<dbReference type="PROSITE" id="PS00463">
    <property type="entry name" value="ZN2_CY6_FUNGAL_1"/>
    <property type="match status" value="1"/>
</dbReference>
<dbReference type="PROSITE" id="PS50048">
    <property type="entry name" value="ZN2_CY6_FUNGAL_2"/>
    <property type="match status" value="1"/>
</dbReference>
<keyword id="KW-0238">DNA-binding</keyword>
<keyword id="KW-0479">Metal-binding</keyword>
<keyword id="KW-0539">Nucleus</keyword>
<keyword id="KW-1185">Reference proteome</keyword>
<keyword id="KW-0804">Transcription</keyword>
<keyword id="KW-0805">Transcription regulation</keyword>
<keyword id="KW-0862">Zinc</keyword>
<comment type="subcellular location">
    <subcellularLocation>
        <location evidence="2">Nucleus</location>
    </subcellularLocation>
</comment>
<organism>
    <name type="scientific">Saccharomyces cerevisiae (strain ATCC 204508 / S288c)</name>
    <name type="common">Baker's yeast</name>
    <dbReference type="NCBI Taxonomy" id="559292"/>
    <lineage>
        <taxon>Eukaryota</taxon>
        <taxon>Fungi</taxon>
        <taxon>Dikarya</taxon>
        <taxon>Ascomycota</taxon>
        <taxon>Saccharomycotina</taxon>
        <taxon>Saccharomycetes</taxon>
        <taxon>Saccharomycetales</taxon>
        <taxon>Saccharomycetaceae</taxon>
        <taxon>Saccharomyces</taxon>
    </lineage>
</organism>
<accession>P35995</accession>
<accession>D6VWY1</accession>
<name>YKW2_YEAST</name>
<feature type="chain" id="PRO_0000115000" description="Uncharacterized transcriptional regulatory protein YKL222C">
    <location>
        <begin position="1"/>
        <end position="705"/>
    </location>
</feature>
<feature type="DNA-binding region" description="Zn(2)-C6 fungal-type" evidence="1">
    <location>
        <begin position="24"/>
        <end position="52"/>
    </location>
</feature>
<protein>
    <recommendedName>
        <fullName>Uncharacterized transcriptional regulatory protein YKL222C</fullName>
    </recommendedName>
</protein>
<proteinExistence type="predicted"/>
<sequence>MKNTELSQKKKLDRQSRRKPAKSCHFCRVRKLKCDRVRPFCGSCSSRNRKQCEYKENTSAMEDQLRKKYRRCSKLEMARRIEELESQLTKQSQPNIHEGQNPLSNMRYLSSKHNRHILYGPTSYRAILATQTDTFAKYREEIWQVLKLSRNNWKREHHYSTLSEISSIETAPPHSGSPSVIEYLCESLPNYEVLCEYLTDFFASDFYDSYQIVHKEKVLRDLQDCFVKGPRSHKTGQHTIISLNLDSKKNYYKVGVMTAIMCLASHPKEVPEAIEVFHKVLTSFVSAKVFYTERVQFLFLRYLYINVAGLDGGDQSHCIFIHGLTIDTAIHMGLNEDLRRLYLSKNHPIEEIPYLERLWLWILFTDVKISLSTGIPVRINDDFVNKVRLENYSSSGDILLYKTTLRLRNIMKQIHAREKPPDIPLIIEDLKKFTIKMFKPLDFYLNASNLNGNEFTELQLWHATLHMIGSLSNLYTLTHQDFDARIFNFSVLAPLNSLHLCFNVLETYFELDNSKLSSKSLCLSKKWPHLNNALFLIYVNAFRALIQIYTIFLQYMENKDIQLFIQRNSSALTYSICPGDFEGPHNKCISLKIAFKEMENIFDHIHQEKLKPLTQIWQNSYYFSIIISMEKIGRRAFNKGMKNIDEGPETENDATENSLTTILNDLEGPLEDFSENFIDDILGSPSAFFDTAISGWSNFEDFFSR</sequence>
<reference key="1">
    <citation type="journal article" date="1994" name="Yeast">
        <title>Sequencing of a 13.2 kb segment next to the left telomere of yeast chromosome XI revealed five open reading frames and recent recombination events with the right arms of chromosomes III and V.</title>
        <authorList>
            <person name="Alexandraki D."/>
            <person name="Tzermia M."/>
        </authorList>
    </citation>
    <scope>NUCLEOTIDE SEQUENCE [GENOMIC DNA]</scope>
</reference>
<reference key="2">
    <citation type="journal article" date="1994" name="Nature">
        <title>Complete DNA sequence of yeast chromosome XI.</title>
        <authorList>
            <person name="Dujon B."/>
            <person name="Alexandraki D."/>
            <person name="Andre B."/>
            <person name="Ansorge W."/>
            <person name="Baladron V."/>
            <person name="Ballesta J.P.G."/>
            <person name="Banrevi A."/>
            <person name="Bolle P.-A."/>
            <person name="Bolotin-Fukuhara M."/>
            <person name="Bossier P."/>
            <person name="Bou G."/>
            <person name="Boyer J."/>
            <person name="Buitrago M.J."/>
            <person name="Cheret G."/>
            <person name="Colleaux L."/>
            <person name="Daignan-Fornier B."/>
            <person name="del Rey F."/>
            <person name="Dion C."/>
            <person name="Domdey H."/>
            <person name="Duesterhoeft A."/>
            <person name="Duesterhus S."/>
            <person name="Entian K.-D."/>
            <person name="Erfle H."/>
            <person name="Esteban P.F."/>
            <person name="Feldmann H."/>
            <person name="Fernandes L."/>
            <person name="Fobo G.M."/>
            <person name="Fritz C."/>
            <person name="Fukuhara H."/>
            <person name="Gabel C."/>
            <person name="Gaillon L."/>
            <person name="Garcia-Cantalejo J.M."/>
            <person name="Garcia-Ramirez J.J."/>
            <person name="Gent M.E."/>
            <person name="Ghazvini M."/>
            <person name="Goffeau A."/>
            <person name="Gonzalez A."/>
            <person name="Grothues D."/>
            <person name="Guerreiro P."/>
            <person name="Hegemann J.H."/>
            <person name="Hewitt N."/>
            <person name="Hilger F."/>
            <person name="Hollenberg C.P."/>
            <person name="Horaitis O."/>
            <person name="Indge K.J."/>
            <person name="Jacquier A."/>
            <person name="James C.M."/>
            <person name="Jauniaux J.-C."/>
            <person name="Jimenez A."/>
            <person name="Keuchel H."/>
            <person name="Kirchrath L."/>
            <person name="Kleine K."/>
            <person name="Koetter P."/>
            <person name="Legrain P."/>
            <person name="Liebl S."/>
            <person name="Louis E.J."/>
            <person name="Maia e Silva A."/>
            <person name="Marck C."/>
            <person name="Monnier A.-L."/>
            <person name="Moestl D."/>
            <person name="Mueller S."/>
            <person name="Obermaier B."/>
            <person name="Oliver S.G."/>
            <person name="Pallier C."/>
            <person name="Pascolo S."/>
            <person name="Pfeiffer F."/>
            <person name="Philippsen P."/>
            <person name="Planta R.J."/>
            <person name="Pohl F.M."/>
            <person name="Pohl T.M."/>
            <person name="Poehlmann R."/>
            <person name="Portetelle D."/>
            <person name="Purnelle B."/>
            <person name="Puzos V."/>
            <person name="Ramezani Rad M."/>
            <person name="Rasmussen S.W."/>
            <person name="Remacha M.A."/>
            <person name="Revuelta J.L."/>
            <person name="Richard G.-F."/>
            <person name="Rieger M."/>
            <person name="Rodrigues-Pousada C."/>
            <person name="Rose M."/>
            <person name="Rupp T."/>
            <person name="Santos M.A."/>
            <person name="Schwager C."/>
            <person name="Sensen C."/>
            <person name="Skala J."/>
            <person name="Soares H."/>
            <person name="Sor F."/>
            <person name="Stegemann J."/>
            <person name="Tettelin H."/>
            <person name="Thierry A."/>
            <person name="Tzermia M."/>
            <person name="Urrestarazu L.A."/>
            <person name="van Dyck L."/>
            <person name="van Vliet-Reedijk J.C."/>
            <person name="Valens M."/>
            <person name="Vandenbol M."/>
            <person name="Vilela C."/>
            <person name="Vissers S."/>
            <person name="von Wettstein D."/>
            <person name="Voss H."/>
            <person name="Wiemann S."/>
            <person name="Xu G."/>
            <person name="Zimmermann J."/>
            <person name="Haasemann M."/>
            <person name="Becker I."/>
            <person name="Mewes H.-W."/>
        </authorList>
    </citation>
    <scope>NUCLEOTIDE SEQUENCE [LARGE SCALE GENOMIC DNA]</scope>
    <source>
        <strain>ATCC 204508 / S288c</strain>
    </source>
</reference>
<reference key="3">
    <citation type="journal article" date="2014" name="G3 (Bethesda)">
        <title>The reference genome sequence of Saccharomyces cerevisiae: Then and now.</title>
        <authorList>
            <person name="Engel S.R."/>
            <person name="Dietrich F.S."/>
            <person name="Fisk D.G."/>
            <person name="Binkley G."/>
            <person name="Balakrishnan R."/>
            <person name="Costanzo M.C."/>
            <person name="Dwight S.S."/>
            <person name="Hitz B.C."/>
            <person name="Karra K."/>
            <person name="Nash R.S."/>
            <person name="Weng S."/>
            <person name="Wong E.D."/>
            <person name="Lloyd P."/>
            <person name="Skrzypek M.S."/>
            <person name="Miyasato S.R."/>
            <person name="Simison M."/>
            <person name="Cherry J.M."/>
        </authorList>
    </citation>
    <scope>GENOME REANNOTATION</scope>
    <source>
        <strain>ATCC 204508 / S288c</strain>
    </source>
</reference>
<evidence type="ECO:0000255" key="1">
    <source>
        <dbReference type="PROSITE-ProRule" id="PRU00227"/>
    </source>
</evidence>
<evidence type="ECO:0000305" key="2"/>
<gene>
    <name type="ordered locus">YKL222C</name>
</gene>